<keyword id="KW-1185">Reference proteome</keyword>
<keyword id="KW-0687">Ribonucleoprotein</keyword>
<keyword id="KW-0689">Ribosomal protein</keyword>
<keyword id="KW-0694">RNA-binding</keyword>
<keyword id="KW-0699">rRNA-binding</keyword>
<comment type="function">
    <text evidence="1">Forms part of the ribosomal stalk which helps the ribosome interact with GTP-bound translation factors.</text>
</comment>
<comment type="subunit">
    <text evidence="1">Part of the ribosomal stalk of the 50S ribosomal subunit. Interacts with L10 and the large rRNA to form the base of the stalk. L10 forms an elongated spine to which L12 dimers bind in a sequential fashion forming a multimeric L10(L12)X complex (By similarity).</text>
</comment>
<comment type="similarity">
    <text evidence="2">Belongs to the universal ribosomal protein uL11 family.</text>
</comment>
<organism>
    <name type="scientific">Aeropyrum pernix (strain ATCC 700893 / DSM 11879 / JCM 9820 / NBRC 100138 / K1)</name>
    <dbReference type="NCBI Taxonomy" id="272557"/>
    <lineage>
        <taxon>Archaea</taxon>
        <taxon>Thermoproteota</taxon>
        <taxon>Thermoprotei</taxon>
        <taxon>Desulfurococcales</taxon>
        <taxon>Desulfurococcaceae</taxon>
        <taxon>Aeropyrum</taxon>
    </lineage>
</organism>
<sequence length="108" mass="11642">MVKGSQVKPSTTELLLKAVSAKAPSGDPIHQKIGDLPFEKIVEIAIEKKPDLLAKTLKAAVKTILGSARSIGVTVDGKDPKEVTRQVDEGVYDAVLAKYEEKWEEAEG</sequence>
<gene>
    <name type="primary">rpl11</name>
    <name type="ordered locus">APE_2174</name>
</gene>
<name>RL11_AERPE</name>
<reference key="1">
    <citation type="journal article" date="1999" name="DNA Res.">
        <title>Complete genome sequence of an aerobic hyper-thermophilic crenarchaeon, Aeropyrum pernix K1.</title>
        <authorList>
            <person name="Kawarabayasi Y."/>
            <person name="Hino Y."/>
            <person name="Horikawa H."/>
            <person name="Yamazaki S."/>
            <person name="Haikawa Y."/>
            <person name="Jin-no K."/>
            <person name="Takahashi M."/>
            <person name="Sekine M."/>
            <person name="Baba S."/>
            <person name="Ankai A."/>
            <person name="Kosugi H."/>
            <person name="Hosoyama A."/>
            <person name="Fukui S."/>
            <person name="Nagai Y."/>
            <person name="Nishijima K."/>
            <person name="Nakazawa H."/>
            <person name="Takamiya M."/>
            <person name="Masuda S."/>
            <person name="Funahashi T."/>
            <person name="Tanaka T."/>
            <person name="Kudoh Y."/>
            <person name="Yamazaki J."/>
            <person name="Kushida N."/>
            <person name="Oguchi A."/>
            <person name="Aoki K."/>
            <person name="Kubota K."/>
            <person name="Nakamura Y."/>
            <person name="Nomura N."/>
            <person name="Sako Y."/>
            <person name="Kikuchi H."/>
        </authorList>
    </citation>
    <scope>NUCLEOTIDE SEQUENCE [LARGE SCALE GENOMIC DNA]</scope>
    <source>
        <strain>ATCC 700893 / DSM 11879 / JCM 9820 / NBRC 100138 / K1</strain>
    </source>
</reference>
<protein>
    <recommendedName>
        <fullName evidence="2">Large ribosomal subunit protein uL11</fullName>
    </recommendedName>
    <alternativeName>
        <fullName>50S ribosomal protein L11</fullName>
    </alternativeName>
</protein>
<feature type="chain" id="PRO_0000104429" description="Large ribosomal subunit protein uL11">
    <location>
        <begin position="1"/>
        <end position="108"/>
    </location>
</feature>
<accession>Q9Y9W5</accession>
<evidence type="ECO:0000250" key="1"/>
<evidence type="ECO:0000305" key="2"/>
<dbReference type="EMBL" id="BA000002">
    <property type="protein sequence ID" value="BAA81185.1"/>
    <property type="molecule type" value="Genomic_DNA"/>
</dbReference>
<dbReference type="PIR" id="A72525">
    <property type="entry name" value="A72525"/>
</dbReference>
<dbReference type="SMR" id="Q9Y9W5"/>
<dbReference type="STRING" id="272557.APE_2174"/>
<dbReference type="EnsemblBacteria" id="BAA81185">
    <property type="protein sequence ID" value="BAA81185"/>
    <property type="gene ID" value="APE_2174"/>
</dbReference>
<dbReference type="KEGG" id="ape:APE_2174"/>
<dbReference type="eggNOG" id="arCOG04372">
    <property type="taxonomic scope" value="Archaea"/>
</dbReference>
<dbReference type="Proteomes" id="UP000002518">
    <property type="component" value="Chromosome"/>
</dbReference>
<dbReference type="GO" id="GO:0015934">
    <property type="term" value="C:large ribosomal subunit"/>
    <property type="evidence" value="ECO:0007669"/>
    <property type="project" value="TreeGrafter"/>
</dbReference>
<dbReference type="GO" id="GO:0070180">
    <property type="term" value="F:large ribosomal subunit rRNA binding"/>
    <property type="evidence" value="ECO:0007669"/>
    <property type="project" value="TreeGrafter"/>
</dbReference>
<dbReference type="GO" id="GO:0003735">
    <property type="term" value="F:structural constituent of ribosome"/>
    <property type="evidence" value="ECO:0007669"/>
    <property type="project" value="InterPro"/>
</dbReference>
<dbReference type="GO" id="GO:0006412">
    <property type="term" value="P:translation"/>
    <property type="evidence" value="ECO:0007669"/>
    <property type="project" value="InterPro"/>
</dbReference>
<dbReference type="Gene3D" id="1.10.10.250">
    <property type="entry name" value="Ribosomal protein L11, C-terminal domain"/>
    <property type="match status" value="1"/>
</dbReference>
<dbReference type="InterPro" id="IPR000911">
    <property type="entry name" value="Ribosomal_uL11"/>
</dbReference>
<dbReference type="InterPro" id="IPR020783">
    <property type="entry name" value="Ribosomal_uL11_C"/>
</dbReference>
<dbReference type="InterPro" id="IPR036769">
    <property type="entry name" value="Ribosomal_uL11_C_sf"/>
</dbReference>
<dbReference type="InterPro" id="IPR020785">
    <property type="entry name" value="Ribosomal_uL11_CS"/>
</dbReference>
<dbReference type="PANTHER" id="PTHR11661">
    <property type="entry name" value="60S RIBOSOMAL PROTEIN L12"/>
    <property type="match status" value="1"/>
</dbReference>
<dbReference type="PANTHER" id="PTHR11661:SF1">
    <property type="entry name" value="LARGE RIBOSOMAL SUBUNIT PROTEIN UL11M"/>
    <property type="match status" value="1"/>
</dbReference>
<dbReference type="Pfam" id="PF00298">
    <property type="entry name" value="Ribosomal_L11"/>
    <property type="match status" value="1"/>
</dbReference>
<dbReference type="SMART" id="SM00649">
    <property type="entry name" value="RL11"/>
    <property type="match status" value="1"/>
</dbReference>
<dbReference type="SUPFAM" id="SSF46906">
    <property type="entry name" value="Ribosomal protein L11, C-terminal domain"/>
    <property type="match status" value="1"/>
</dbReference>
<dbReference type="PROSITE" id="PS00359">
    <property type="entry name" value="RIBOSOMAL_L11"/>
    <property type="match status" value="1"/>
</dbReference>
<proteinExistence type="inferred from homology"/>